<dbReference type="PDB" id="2M62">
    <property type="method" value="NMR"/>
    <property type="chains" value="A=1-12"/>
</dbReference>
<dbReference type="PDBsum" id="2M62"/>
<dbReference type="BMRB" id="P0CI22"/>
<dbReference type="SMR" id="P0CI22"/>
<dbReference type="EvolutionaryTrace" id="P0CI22"/>
<dbReference type="GO" id="GO:0005576">
    <property type="term" value="C:extracellular region"/>
    <property type="evidence" value="ECO:0007669"/>
    <property type="project" value="UniProtKB-SubCell"/>
</dbReference>
<dbReference type="GO" id="GO:0090729">
    <property type="term" value="F:toxin activity"/>
    <property type="evidence" value="ECO:0007669"/>
    <property type="project" value="UniProtKB-KW"/>
</dbReference>
<sequence length="12" mass="1237">GVCCGVSFCYPC</sequence>
<evidence type="ECO:0000250" key="1">
    <source>
        <dbReference type="UniProtKB" id="P58808"/>
    </source>
</evidence>
<evidence type="ECO:0000269" key="2">
    <source>
    </source>
</evidence>
<evidence type="ECO:0000303" key="3">
    <source>
    </source>
</evidence>
<evidence type="ECO:0000305" key="4"/>
<evidence type="ECO:0000305" key="5">
    <source>
    </source>
</evidence>
<evidence type="ECO:0007744" key="6">
    <source>
        <dbReference type="PDB" id="2M62"/>
    </source>
</evidence>
<evidence type="ECO:0007829" key="7">
    <source>
        <dbReference type="PDB" id="2M62"/>
    </source>
</evidence>
<name>CTA48_CONAO</name>
<accession>P0CI22</accession>
<keyword id="KW-0002">3D-structure</keyword>
<keyword id="KW-0903">Direct protein sequencing</keyword>
<keyword id="KW-1015">Disulfide bond</keyword>
<keyword id="KW-0379">Hydroxylation</keyword>
<keyword id="KW-0528">Neurotoxin</keyword>
<keyword id="KW-0964">Secreted</keyword>
<keyword id="KW-0800">Toxin</keyword>
<feature type="peptide" id="PRO_0000402418" description="Chi-conotoxin-like Ar1248" evidence="2">
    <location>
        <begin position="1"/>
        <end position="12"/>
    </location>
</feature>
<feature type="modified residue" description="4-hydroxyproline; partial" evidence="2">
    <location>
        <position position="11"/>
    </location>
</feature>
<feature type="disulfide bond" evidence="2 6">
    <location>
        <begin position="3"/>
        <end position="12"/>
    </location>
</feature>
<feature type="disulfide bond" evidence="2 6">
    <location>
        <begin position="4"/>
        <end position="9"/>
    </location>
</feature>
<feature type="strand" evidence="7">
    <location>
        <begin position="3"/>
        <end position="5"/>
    </location>
</feature>
<feature type="strand" evidence="7">
    <location>
        <begin position="8"/>
        <end position="10"/>
    </location>
</feature>
<proteinExistence type="evidence at protein level"/>
<organism>
    <name type="scientific">Conus araneosus</name>
    <name type="common">Cobweb cone</name>
    <dbReference type="NCBI Taxonomy" id="101286"/>
    <lineage>
        <taxon>Eukaryota</taxon>
        <taxon>Metazoa</taxon>
        <taxon>Spiralia</taxon>
        <taxon>Lophotrochozoa</taxon>
        <taxon>Mollusca</taxon>
        <taxon>Gastropoda</taxon>
        <taxon>Caenogastropoda</taxon>
        <taxon>Neogastropoda</taxon>
        <taxon>Conoidea</taxon>
        <taxon>Conidae</taxon>
        <taxon>Conus</taxon>
    </lineage>
</organism>
<reference key="1">
    <citation type="journal article" date="2010" name="Anal. Chem.">
        <title>Disulfide bond assignments by mass spectrometry of native natural peptides: cysteine pairing in disulfide bonded conotoxins.</title>
        <authorList>
            <person name="Gupta K."/>
            <person name="Kumar M."/>
            <person name="Balaram P."/>
        </authorList>
    </citation>
    <scope>PROTEIN SEQUENCE</scope>
    <scope>MASS SPECTROMETRY</scope>
    <scope>DISULFIDE BONDS</scope>
    <scope>HYDROXYLATION AT PRO-11</scope>
    <scope>SUBCELLULAR LOCATION</scope>
    <source>
        <tissue>Venom</tissue>
    </source>
</reference>
<protein>
    <recommendedName>
        <fullName evidence="3 4">Chi-conotoxin-like Ar1248</fullName>
    </recommendedName>
    <alternativeName>
        <fullName evidence="3">Conotoxin Ar1232</fullName>
    </alternativeName>
</protein>
<comment type="function">
    <text evidence="1">Inhibits the neuronal noradrenaline transporter (NET/SLC6A2).</text>
</comment>
<comment type="subcellular location">
    <subcellularLocation>
        <location evidence="2">Secreted</location>
    </subcellularLocation>
</comment>
<comment type="tissue specificity">
    <text evidence="5">Expressed by the venom duct.</text>
</comment>
<comment type="domain">
    <text evidence="4">The cysteine framework is X (CC-CX[hydroxyPro]C).</text>
</comment>
<comment type="mass spectrometry" mass="1249.4" method="Electrospray" evidence="2">
    <text>With hydroxylation.</text>
</comment>
<comment type="mass spectrometry" mass="1233.5" method="MALDI" evidence="2">
    <text>Without hydroxylation.</text>
</comment>
<comment type="similarity">
    <text evidence="4">Belongs to the conotoxin T superfamily.</text>
</comment>